<name>Y4387_HAHCH</name>
<keyword id="KW-1003">Cell membrane</keyword>
<keyword id="KW-0472">Membrane</keyword>
<keyword id="KW-1185">Reference proteome</keyword>
<keyword id="KW-0812">Transmembrane</keyword>
<keyword id="KW-1133">Transmembrane helix</keyword>
<evidence type="ECO:0000255" key="1">
    <source>
        <dbReference type="HAMAP-Rule" id="MF_01361"/>
    </source>
</evidence>
<gene>
    <name type="ordered locus">HCH_04387</name>
</gene>
<protein>
    <recommendedName>
        <fullName evidence="1">UPF0391 membrane protein HCH_04387</fullName>
    </recommendedName>
</protein>
<reference key="1">
    <citation type="journal article" date="2005" name="Nucleic Acids Res.">
        <title>Genomic blueprint of Hahella chejuensis, a marine microbe producing an algicidal agent.</title>
        <authorList>
            <person name="Jeong H."/>
            <person name="Yim J.H."/>
            <person name="Lee C."/>
            <person name="Choi S.-H."/>
            <person name="Park Y.K."/>
            <person name="Yoon S.H."/>
            <person name="Hur C.-G."/>
            <person name="Kang H.-Y."/>
            <person name="Kim D."/>
            <person name="Lee H.H."/>
            <person name="Park K.H."/>
            <person name="Park S.-H."/>
            <person name="Park H.-S."/>
            <person name="Lee H.K."/>
            <person name="Oh T.K."/>
            <person name="Kim J.F."/>
        </authorList>
    </citation>
    <scope>NUCLEOTIDE SEQUENCE [LARGE SCALE GENOMIC DNA]</scope>
    <source>
        <strain>KCTC 2396</strain>
    </source>
</reference>
<comment type="subcellular location">
    <subcellularLocation>
        <location evidence="1">Cell membrane</location>
        <topology evidence="1">Multi-pass membrane protein</topology>
    </subcellularLocation>
</comment>
<comment type="similarity">
    <text evidence="1">Belongs to the UPF0391 family.</text>
</comment>
<dbReference type="EMBL" id="CP000155">
    <property type="protein sequence ID" value="ABC31092.1"/>
    <property type="molecule type" value="Genomic_DNA"/>
</dbReference>
<dbReference type="STRING" id="349521.HCH_04387"/>
<dbReference type="KEGG" id="hch:HCH_04387"/>
<dbReference type="eggNOG" id="COG5487">
    <property type="taxonomic scope" value="Bacteria"/>
</dbReference>
<dbReference type="HOGENOM" id="CLU_187346_1_0_6"/>
<dbReference type="Proteomes" id="UP000000238">
    <property type="component" value="Chromosome"/>
</dbReference>
<dbReference type="GO" id="GO:0005886">
    <property type="term" value="C:plasma membrane"/>
    <property type="evidence" value="ECO:0007669"/>
    <property type="project" value="UniProtKB-SubCell"/>
</dbReference>
<dbReference type="HAMAP" id="MF_01361">
    <property type="entry name" value="UPF0391"/>
    <property type="match status" value="1"/>
</dbReference>
<dbReference type="InterPro" id="IPR009760">
    <property type="entry name" value="DUF1328"/>
</dbReference>
<dbReference type="NCBIfam" id="NF010226">
    <property type="entry name" value="PRK13682.1-1"/>
    <property type="match status" value="1"/>
</dbReference>
<dbReference type="NCBIfam" id="NF010228">
    <property type="entry name" value="PRK13682.1-3"/>
    <property type="match status" value="1"/>
</dbReference>
<dbReference type="NCBIfam" id="NF010229">
    <property type="entry name" value="PRK13682.1-4"/>
    <property type="match status" value="1"/>
</dbReference>
<dbReference type="Pfam" id="PF07043">
    <property type="entry name" value="DUF1328"/>
    <property type="match status" value="1"/>
</dbReference>
<dbReference type="PIRSF" id="PIRSF036466">
    <property type="entry name" value="UCP036466"/>
    <property type="match status" value="1"/>
</dbReference>
<sequence>MLYWSIVFFVVALVAGVLGFTGIAAATADIAQILFVIFLVLFVISIIAGGFRRNRL</sequence>
<feature type="chain" id="PRO_0000256740" description="UPF0391 membrane protein HCH_04387">
    <location>
        <begin position="1"/>
        <end position="56"/>
    </location>
</feature>
<feature type="transmembrane region" description="Helical" evidence="1">
    <location>
        <begin position="6"/>
        <end position="26"/>
    </location>
</feature>
<feature type="transmembrane region" description="Helical" evidence="1">
    <location>
        <begin position="30"/>
        <end position="50"/>
    </location>
</feature>
<organism>
    <name type="scientific">Hahella chejuensis (strain KCTC 2396)</name>
    <dbReference type="NCBI Taxonomy" id="349521"/>
    <lineage>
        <taxon>Bacteria</taxon>
        <taxon>Pseudomonadati</taxon>
        <taxon>Pseudomonadota</taxon>
        <taxon>Gammaproteobacteria</taxon>
        <taxon>Oceanospirillales</taxon>
        <taxon>Hahellaceae</taxon>
        <taxon>Hahella</taxon>
    </lineage>
</organism>
<accession>Q2SE32</accession>
<proteinExistence type="inferred from homology"/>